<comment type="function">
    <text evidence="3 7 10 13 17 18">Receptor for Wnt proteins (PubMed:10097073, PubMed:20530549, PubMed:26908622, PubMed:9054360). Functions in the canonical Wnt/beta-catenin signaling pathway. In vitro activates WNT2, WNT10B, WNT5A, but not WNT2B or WNT4 signaling (By similarity). In neurons, activation by WNT7A promotes formation of synapses (PubMed:20530549). May be involved in transduction and intercellular transmission of polarity information during tissue morphogenesis and/or in differentiated tissues (Probable). Plays a role in yolk sac angiogenesis and in placental vascularization (By similarity). Plays a role in ocular development (PubMed:26908622).</text>
</comment>
<comment type="subunit">
    <text evidence="3 8 9 10 13 14">Binding of unsaturated fatty acid molecules (via FZ domain) promotes homodimerization (PubMed:28377511). Interacts with WNT2B (PubMed:12490564). Interacts with WNT3A (PubMed:26908622). Interacts with WNT7A (PubMed:18230341, PubMed:20530549, PubMed:26908622). Interacts with GOPC (By similarity).</text>
</comment>
<comment type="interaction">
    <interactant intactId="EBI-3913027">
        <id>Q13467</id>
    </interactant>
    <interactant intactId="EBI-1046810">
        <id>Q6P3W7</id>
        <label>SCYL2</label>
    </interactant>
    <organismsDiffer>false</organismsDiffer>
    <experiments>4</experiments>
</comment>
<comment type="interaction">
    <interactant intactId="EBI-3913027">
        <id>Q13467</id>
    </interactant>
    <interactant intactId="EBI-12147661">
        <id>P78383</id>
        <label>SLC35B1</label>
    </interactant>
    <organismsDiffer>false</organismsDiffer>
    <experiments>3</experiments>
</comment>
<comment type="interaction">
    <interactant intactId="EBI-3913027">
        <id>Q13467</id>
    </interactant>
    <interactant intactId="EBI-20596828">
        <id>M4NKV9</id>
        <label>tcdB</label>
    </interactant>
    <organismsDiffer>true</organismsDiffer>
    <experiments>3</experiments>
</comment>
<comment type="subcellular location">
    <subcellularLocation>
        <location evidence="13">Cell membrane</location>
        <topology evidence="2">Multi-pass membrane protein</topology>
    </subcellularLocation>
    <subcellularLocation>
        <location evidence="3">Golgi apparatus membrane</location>
        <topology evidence="3">Multi-pass membrane protein</topology>
    </subcellularLocation>
    <subcellularLocation>
        <location evidence="2">Synapse</location>
    </subcellularLocation>
    <subcellularLocation>
        <location evidence="2">Perikaryon</location>
    </subcellularLocation>
    <subcellularLocation>
        <location evidence="2">Cell projection</location>
        <location evidence="2">Dendrite</location>
    </subcellularLocation>
    <subcellularLocation>
        <location evidence="2">Cell projection</location>
        <location evidence="2">Axon</location>
    </subcellularLocation>
    <text evidence="3">Localized at the plasma membrane and also found at the Golgi apparatus.</text>
</comment>
<comment type="domain">
    <text evidence="1">The PDZ-binding motif mediates interaction with GOPC.</text>
</comment>
<comment type="domain">
    <text evidence="1">Lys-Thr-X-X-X-Trp motif interacts with the PDZ domain of Dvl (Disheveled) family members and is involved in the activation of the Wnt/beta-catenin signaling pathway.</text>
</comment>
<comment type="domain">
    <text evidence="1">The FZ domain is involved in binding with Wnt ligands.</text>
</comment>
<comment type="PTM">
    <text evidence="11 12">Ubiquitinated by RNF43 and ZNRF3, leading to its degradation by the proteasome.</text>
</comment>
<comment type="disease" evidence="13 15 16">
    <disease id="DI-06852">
        <name>Microphthalmia/Coloboma 11</name>
        <acronym>MCOPCB11</acronym>
        <description>A form of colobomatous microphthalmia, a disorder of eye formation, ranging from small size of a single eye to complete bilateral absence of ocular tissues. Ocular abnormalities like coloboma, opacities of the cornea and lens, scaring of the retina and choroid, and other abnormalities may also be present. Ocular colobomas are a set of malformations resulting from abnormal morphogenesis of the optic cup and stalk, and the fusion of the fetal fissure (optic fissure). MCOPCB11 is an autosomal dominant form with incomplete penetrance.</description>
        <dbReference type="MIM" id="620731"/>
    </disease>
    <text>The disease is caused by variants affecting the gene represented in this entry.</text>
</comment>
<comment type="similarity">
    <text evidence="18">Belongs to the G-protein coupled receptor Fz/Smo family.</text>
</comment>
<organism>
    <name type="scientific">Homo sapiens</name>
    <name type="common">Human</name>
    <dbReference type="NCBI Taxonomy" id="9606"/>
    <lineage>
        <taxon>Eukaryota</taxon>
        <taxon>Metazoa</taxon>
        <taxon>Chordata</taxon>
        <taxon>Craniata</taxon>
        <taxon>Vertebrata</taxon>
        <taxon>Euteleostomi</taxon>
        <taxon>Mammalia</taxon>
        <taxon>Eutheria</taxon>
        <taxon>Euarchontoglires</taxon>
        <taxon>Primates</taxon>
        <taxon>Haplorrhini</taxon>
        <taxon>Catarrhini</taxon>
        <taxon>Hominidae</taxon>
        <taxon>Homo</taxon>
    </lineage>
</organism>
<accession>Q13467</accession>
<accession>A8K2X1</accession>
<accession>B2RCZ1</accession>
<accession>Q53R22</accession>
<evidence type="ECO:0000250" key="1"/>
<evidence type="ECO:0000250" key="2">
    <source>
        <dbReference type="UniProtKB" id="Q8CHL0"/>
    </source>
</evidence>
<evidence type="ECO:0000250" key="3">
    <source>
        <dbReference type="UniProtKB" id="Q9EQD0"/>
    </source>
</evidence>
<evidence type="ECO:0000255" key="4"/>
<evidence type="ECO:0000255" key="5">
    <source>
        <dbReference type="PROSITE-ProRule" id="PRU00090"/>
    </source>
</evidence>
<evidence type="ECO:0000256" key="6">
    <source>
        <dbReference type="SAM" id="MobiDB-lite"/>
    </source>
</evidence>
<evidence type="ECO:0000269" key="7">
    <source>
    </source>
</evidence>
<evidence type="ECO:0000269" key="8">
    <source>
    </source>
</evidence>
<evidence type="ECO:0000269" key="9">
    <source>
    </source>
</evidence>
<evidence type="ECO:0000269" key="10">
    <source>
    </source>
</evidence>
<evidence type="ECO:0000269" key="11">
    <source>
    </source>
</evidence>
<evidence type="ECO:0000269" key="12">
    <source>
    </source>
</evidence>
<evidence type="ECO:0000269" key="13">
    <source>
    </source>
</evidence>
<evidence type="ECO:0000269" key="14">
    <source>
    </source>
</evidence>
<evidence type="ECO:0000269" key="15">
    <source>
    </source>
</evidence>
<evidence type="ECO:0000269" key="16">
    <source>
    </source>
</evidence>
<evidence type="ECO:0000269" key="17">
    <source>
    </source>
</evidence>
<evidence type="ECO:0000305" key="18"/>
<evidence type="ECO:0007744" key="19">
    <source>
        <dbReference type="PDB" id="5URY"/>
    </source>
</evidence>
<evidence type="ECO:0007744" key="20">
    <source>
        <dbReference type="PDB" id="5URZ"/>
    </source>
</evidence>
<evidence type="ECO:0007829" key="21">
    <source>
        <dbReference type="PDB" id="6O39"/>
    </source>
</evidence>
<proteinExistence type="evidence at protein level"/>
<gene>
    <name type="primary">FZD5</name>
    <name type="synonym">C2orf31</name>
</gene>
<keyword id="KW-0002">3D-structure</keyword>
<keyword id="KW-1003">Cell membrane</keyword>
<keyword id="KW-0966">Cell projection</keyword>
<keyword id="KW-0217">Developmental protein</keyword>
<keyword id="KW-1015">Disulfide bond</keyword>
<keyword id="KW-0297">G-protein coupled receptor</keyword>
<keyword id="KW-0325">Glycoprotein</keyword>
<keyword id="KW-0333">Golgi apparatus</keyword>
<keyword id="KW-0446">Lipid-binding</keyword>
<keyword id="KW-0472">Membrane</keyword>
<keyword id="KW-1013">Microphthalmia</keyword>
<keyword id="KW-1267">Proteomics identification</keyword>
<keyword id="KW-0675">Receptor</keyword>
<keyword id="KW-1185">Reference proteome</keyword>
<keyword id="KW-0732">Signal</keyword>
<keyword id="KW-0770">Synapse</keyword>
<keyword id="KW-0807">Transducer</keyword>
<keyword id="KW-0812">Transmembrane</keyword>
<keyword id="KW-1133">Transmembrane helix</keyword>
<keyword id="KW-0832">Ubl conjugation</keyword>
<keyword id="KW-0879">Wnt signaling pathway</keyword>
<name>FZD5_HUMAN</name>
<dbReference type="EMBL" id="U43318">
    <property type="protein sequence ID" value="AAC50385.1"/>
    <property type="molecule type" value="mRNA"/>
</dbReference>
<dbReference type="EMBL" id="AB043702">
    <property type="protein sequence ID" value="BAB60959.1"/>
    <property type="molecule type" value="mRNA"/>
</dbReference>
<dbReference type="EMBL" id="AK290386">
    <property type="protein sequence ID" value="BAF83075.1"/>
    <property type="molecule type" value="mRNA"/>
</dbReference>
<dbReference type="EMBL" id="AK315338">
    <property type="protein sequence ID" value="BAG37738.1"/>
    <property type="molecule type" value="mRNA"/>
</dbReference>
<dbReference type="EMBL" id="AC096772">
    <property type="protein sequence ID" value="AAY24058.1"/>
    <property type="molecule type" value="Genomic_DNA"/>
</dbReference>
<dbReference type="CCDS" id="CCDS33366.1"/>
<dbReference type="RefSeq" id="NP_003459.2">
    <property type="nucleotide sequence ID" value="NM_003468.3"/>
</dbReference>
<dbReference type="PDB" id="5URY">
    <property type="method" value="X-ray"/>
    <property type="resolution" value="2.10 A"/>
    <property type="chains" value="A/B=28-155"/>
</dbReference>
<dbReference type="PDB" id="5URZ">
    <property type="method" value="X-ray"/>
    <property type="resolution" value="2.20 A"/>
    <property type="chains" value="A/B=28-155"/>
</dbReference>
<dbReference type="PDB" id="6O39">
    <property type="method" value="X-ray"/>
    <property type="resolution" value="1.80 A"/>
    <property type="chains" value="C=28-150"/>
</dbReference>
<dbReference type="PDB" id="6WW2">
    <property type="method" value="EM"/>
    <property type="resolution" value="3.70 A"/>
    <property type="chains" value="R=27-428, R=441-546"/>
</dbReference>
<dbReference type="PDBsum" id="5URY"/>
<dbReference type="PDBsum" id="5URZ"/>
<dbReference type="PDBsum" id="6O39"/>
<dbReference type="PDBsum" id="6WW2"/>
<dbReference type="EMDB" id="EMD-21927"/>
<dbReference type="SMR" id="Q13467"/>
<dbReference type="BioGRID" id="113609">
    <property type="interactions" value="22"/>
</dbReference>
<dbReference type="CORUM" id="Q13467"/>
<dbReference type="FunCoup" id="Q13467">
    <property type="interactions" value="605"/>
</dbReference>
<dbReference type="IntAct" id="Q13467">
    <property type="interactions" value="17"/>
</dbReference>
<dbReference type="MINT" id="Q13467"/>
<dbReference type="STRING" id="9606.ENSP00000354607"/>
<dbReference type="ChEMBL" id="CHEMBL3559687"/>
<dbReference type="GuidetoPHARMACOLOGY" id="233"/>
<dbReference type="GlyCosmos" id="Q13467">
    <property type="glycosylation" value="3 sites, 1 glycan"/>
</dbReference>
<dbReference type="GlyGen" id="Q13467">
    <property type="glycosylation" value="3 sites, 1 N-linked glycan (1 site), 1 O-linked glycan (1 site)"/>
</dbReference>
<dbReference type="iPTMnet" id="Q13467"/>
<dbReference type="PhosphoSitePlus" id="Q13467"/>
<dbReference type="SwissPalm" id="Q13467"/>
<dbReference type="BioMuta" id="FZD5"/>
<dbReference type="DMDM" id="116242481"/>
<dbReference type="jPOST" id="Q13467"/>
<dbReference type="MassIVE" id="Q13467"/>
<dbReference type="PaxDb" id="9606-ENSP00000354607"/>
<dbReference type="PeptideAtlas" id="Q13467"/>
<dbReference type="ProteomicsDB" id="59463"/>
<dbReference type="TopDownProteomics" id="Q13467"/>
<dbReference type="ABCD" id="Q13467">
    <property type="antibodies" value="65 sequenced antibodies"/>
</dbReference>
<dbReference type="Antibodypedia" id="19996">
    <property type="antibodies" value="415 antibodies from 36 providers"/>
</dbReference>
<dbReference type="DNASU" id="7855"/>
<dbReference type="Ensembl" id="ENST00000295417.4">
    <property type="protein sequence ID" value="ENSP00000354607.3"/>
    <property type="gene ID" value="ENSG00000163251.4"/>
</dbReference>
<dbReference type="GeneID" id="7855"/>
<dbReference type="KEGG" id="hsa:7855"/>
<dbReference type="MANE-Select" id="ENST00000295417.4">
    <property type="protein sequence ID" value="ENSP00000354607.3"/>
    <property type="RefSeq nucleotide sequence ID" value="NM_003468.4"/>
    <property type="RefSeq protein sequence ID" value="NP_003459.2"/>
</dbReference>
<dbReference type="UCSC" id="uc002vcj.4">
    <property type="organism name" value="human"/>
</dbReference>
<dbReference type="AGR" id="HGNC:4043"/>
<dbReference type="CTD" id="7855"/>
<dbReference type="DisGeNET" id="7855"/>
<dbReference type="GeneCards" id="FZD5"/>
<dbReference type="HGNC" id="HGNC:4043">
    <property type="gene designation" value="FZD5"/>
</dbReference>
<dbReference type="HPA" id="ENSG00000163251">
    <property type="expression patterns" value="Tissue enhanced (liver)"/>
</dbReference>
<dbReference type="MalaCards" id="FZD5"/>
<dbReference type="MIM" id="601723">
    <property type="type" value="gene"/>
</dbReference>
<dbReference type="MIM" id="620731">
    <property type="type" value="phenotype"/>
</dbReference>
<dbReference type="neXtProt" id="NX_Q13467"/>
<dbReference type="OpenTargets" id="ENSG00000163251"/>
<dbReference type="Orphanet" id="98942">
    <property type="disease" value="Coloboma of choroid and retina"/>
</dbReference>
<dbReference type="Orphanet" id="98943">
    <property type="disease" value="Coloboma of eye lens"/>
</dbReference>
<dbReference type="Orphanet" id="98946">
    <property type="disease" value="Coloboma of eyelid"/>
</dbReference>
<dbReference type="Orphanet" id="98944">
    <property type="disease" value="Coloboma of iris"/>
</dbReference>
<dbReference type="Orphanet" id="98945">
    <property type="disease" value="Coloboma of macula"/>
</dbReference>
<dbReference type="Orphanet" id="98947">
    <property type="disease" value="Coloboma of optic disc"/>
</dbReference>
<dbReference type="PharmGKB" id="PA28460"/>
<dbReference type="VEuPathDB" id="HostDB:ENSG00000163251"/>
<dbReference type="eggNOG" id="KOG3577">
    <property type="taxonomic scope" value="Eukaryota"/>
</dbReference>
<dbReference type="GeneTree" id="ENSGT00940000162639"/>
<dbReference type="HOGENOM" id="CLU_007873_2_0_1"/>
<dbReference type="InParanoid" id="Q13467"/>
<dbReference type="OMA" id="NCAIPCK"/>
<dbReference type="OrthoDB" id="10053709at2759"/>
<dbReference type="PAN-GO" id="Q13467">
    <property type="GO annotations" value="6 GO annotations based on evolutionary models"/>
</dbReference>
<dbReference type="PhylomeDB" id="Q13467"/>
<dbReference type="TreeFam" id="TF317907"/>
<dbReference type="PathwayCommons" id="Q13467"/>
<dbReference type="Reactome" id="R-HSA-373080">
    <property type="pathway name" value="Class B/2 (Secretin family receptors)"/>
</dbReference>
<dbReference type="Reactome" id="R-HSA-4086398">
    <property type="pathway name" value="Ca2+ pathway"/>
</dbReference>
<dbReference type="Reactome" id="R-HSA-4608870">
    <property type="pathway name" value="Asymmetric localization of PCP proteins"/>
</dbReference>
<dbReference type="Reactome" id="R-HSA-4641262">
    <property type="pathway name" value="Disassembly of the destruction complex and recruitment of AXIN to the membrane"/>
</dbReference>
<dbReference type="Reactome" id="R-HSA-4641263">
    <property type="pathway name" value="Regulation of FZD by ubiquitination"/>
</dbReference>
<dbReference type="Reactome" id="R-HSA-5140745">
    <property type="pathway name" value="WNT5A-dependent internalization of FZD2, FZD5 and ROR2"/>
</dbReference>
<dbReference type="Reactome" id="R-HSA-5340588">
    <property type="pathway name" value="Signaling by RNF43 mutants"/>
</dbReference>
<dbReference type="SignaLink" id="Q13467"/>
<dbReference type="SIGNOR" id="Q13467"/>
<dbReference type="BioGRID-ORCS" id="7855">
    <property type="hits" value="24 hits in 1164 CRISPR screens"/>
</dbReference>
<dbReference type="ChiTaRS" id="FZD5">
    <property type="organism name" value="human"/>
</dbReference>
<dbReference type="GeneWiki" id="FZD5"/>
<dbReference type="GenomeRNAi" id="7855"/>
<dbReference type="Pharos" id="Q13467">
    <property type="development level" value="Tbio"/>
</dbReference>
<dbReference type="PRO" id="PR:Q13467"/>
<dbReference type="Proteomes" id="UP000005640">
    <property type="component" value="Chromosome 2"/>
</dbReference>
<dbReference type="RNAct" id="Q13467">
    <property type="molecule type" value="protein"/>
</dbReference>
<dbReference type="Bgee" id="ENSG00000163251">
    <property type="expression patterns" value="Expressed in jejunal mucosa and 176 other cell types or tissues"/>
</dbReference>
<dbReference type="GO" id="GO:0030424">
    <property type="term" value="C:axon"/>
    <property type="evidence" value="ECO:0007669"/>
    <property type="project" value="UniProtKB-SubCell"/>
</dbReference>
<dbReference type="GO" id="GO:0005923">
    <property type="term" value="C:bicellular tight junction"/>
    <property type="evidence" value="ECO:0007669"/>
    <property type="project" value="Ensembl"/>
</dbReference>
<dbReference type="GO" id="GO:0009986">
    <property type="term" value="C:cell surface"/>
    <property type="evidence" value="ECO:0000314"/>
    <property type="project" value="BHF-UCL"/>
</dbReference>
<dbReference type="GO" id="GO:0030669">
    <property type="term" value="C:clathrin-coated endocytic vesicle membrane"/>
    <property type="evidence" value="ECO:0000304"/>
    <property type="project" value="Reactome"/>
</dbReference>
<dbReference type="GO" id="GO:0030425">
    <property type="term" value="C:dendrite"/>
    <property type="evidence" value="ECO:0007669"/>
    <property type="project" value="UniProtKB-SubCell"/>
</dbReference>
<dbReference type="GO" id="GO:0031901">
    <property type="term" value="C:early endosome membrane"/>
    <property type="evidence" value="ECO:0000304"/>
    <property type="project" value="Reactome"/>
</dbReference>
<dbReference type="GO" id="GO:0000139">
    <property type="term" value="C:Golgi membrane"/>
    <property type="evidence" value="ECO:0007669"/>
    <property type="project" value="UniProtKB-SubCell"/>
</dbReference>
<dbReference type="GO" id="GO:0043204">
    <property type="term" value="C:perikaryon"/>
    <property type="evidence" value="ECO:0007669"/>
    <property type="project" value="UniProtKB-SubCell"/>
</dbReference>
<dbReference type="GO" id="GO:0048471">
    <property type="term" value="C:perinuclear region of cytoplasm"/>
    <property type="evidence" value="ECO:0007669"/>
    <property type="project" value="Ensembl"/>
</dbReference>
<dbReference type="GO" id="GO:0005886">
    <property type="term" value="C:plasma membrane"/>
    <property type="evidence" value="ECO:0000314"/>
    <property type="project" value="UniProtKB"/>
</dbReference>
<dbReference type="GO" id="GO:0045202">
    <property type="term" value="C:synapse"/>
    <property type="evidence" value="ECO:0007669"/>
    <property type="project" value="UniProtKB-SubCell"/>
</dbReference>
<dbReference type="GO" id="GO:0001540">
    <property type="term" value="F:amyloid-beta binding"/>
    <property type="evidence" value="ECO:0000353"/>
    <property type="project" value="ARUK-UCL"/>
</dbReference>
<dbReference type="GO" id="GO:0004930">
    <property type="term" value="F:G protein-coupled receptor activity"/>
    <property type="evidence" value="ECO:0007669"/>
    <property type="project" value="UniProtKB-KW"/>
</dbReference>
<dbReference type="GO" id="GO:0008289">
    <property type="term" value="F:lipid binding"/>
    <property type="evidence" value="ECO:0007669"/>
    <property type="project" value="UniProtKB-KW"/>
</dbReference>
<dbReference type="GO" id="GO:0019901">
    <property type="term" value="F:protein kinase binding"/>
    <property type="evidence" value="ECO:0000353"/>
    <property type="project" value="BHF-UCL"/>
</dbReference>
<dbReference type="GO" id="GO:0044877">
    <property type="term" value="F:protein-containing complex binding"/>
    <property type="evidence" value="ECO:0000353"/>
    <property type="project" value="ARUK-UCL"/>
</dbReference>
<dbReference type="GO" id="GO:0031625">
    <property type="term" value="F:ubiquitin protein ligase binding"/>
    <property type="evidence" value="ECO:0000353"/>
    <property type="project" value="UniProtKB"/>
</dbReference>
<dbReference type="GO" id="GO:0042813">
    <property type="term" value="F:Wnt receptor activity"/>
    <property type="evidence" value="ECO:0000314"/>
    <property type="project" value="UniProtKB"/>
</dbReference>
<dbReference type="GO" id="GO:0017147">
    <property type="term" value="F:Wnt-protein binding"/>
    <property type="evidence" value="ECO:0000314"/>
    <property type="project" value="UniProtKB"/>
</dbReference>
<dbReference type="GO" id="GO:0001525">
    <property type="term" value="P:angiogenesis"/>
    <property type="evidence" value="ECO:0007669"/>
    <property type="project" value="Ensembl"/>
</dbReference>
<dbReference type="GO" id="GO:0008595">
    <property type="term" value="P:anterior/posterior axis specification, embryo"/>
    <property type="evidence" value="ECO:0000314"/>
    <property type="project" value="BHF-UCL"/>
</dbReference>
<dbReference type="GO" id="GO:0060561">
    <property type="term" value="P:apoptotic process involved in morphogenesis"/>
    <property type="evidence" value="ECO:0007669"/>
    <property type="project" value="Ensembl"/>
</dbReference>
<dbReference type="GO" id="GO:0060670">
    <property type="term" value="P:branching involved in labyrinthine layer morphogenesis"/>
    <property type="evidence" value="ECO:0007669"/>
    <property type="project" value="Ensembl"/>
</dbReference>
<dbReference type="GO" id="GO:0060070">
    <property type="term" value="P:canonical Wnt signaling pathway"/>
    <property type="evidence" value="ECO:0000314"/>
    <property type="project" value="UniProtKB"/>
</dbReference>
<dbReference type="GO" id="GO:0071219">
    <property type="term" value="P:cellular response to molecule of bacterial origin"/>
    <property type="evidence" value="ECO:0000314"/>
    <property type="project" value="BHF-UCL"/>
</dbReference>
<dbReference type="GO" id="GO:0060718">
    <property type="term" value="P:chorionic trophoblast cell differentiation"/>
    <property type="evidence" value="ECO:0007669"/>
    <property type="project" value="Ensembl"/>
</dbReference>
<dbReference type="GO" id="GO:0000578">
    <property type="term" value="P:embryonic axis specification"/>
    <property type="evidence" value="ECO:0000314"/>
    <property type="project" value="BHF-UCL"/>
</dbReference>
<dbReference type="GO" id="GO:0048596">
    <property type="term" value="P:embryonic camera-type eye morphogenesis"/>
    <property type="evidence" value="ECO:0007669"/>
    <property type="project" value="Ensembl"/>
</dbReference>
<dbReference type="GO" id="GO:0001654">
    <property type="term" value="P:eye development"/>
    <property type="evidence" value="ECO:0000315"/>
    <property type="project" value="UniProtKB"/>
</dbReference>
<dbReference type="GO" id="GO:0002071">
    <property type="term" value="P:glandular epithelial cell maturation"/>
    <property type="evidence" value="ECO:0007669"/>
    <property type="project" value="Ensembl"/>
</dbReference>
<dbReference type="GO" id="GO:0060574">
    <property type="term" value="P:intestinal epithelial cell maturation"/>
    <property type="evidence" value="ECO:0007669"/>
    <property type="project" value="Ensembl"/>
</dbReference>
<dbReference type="GO" id="GO:0060716">
    <property type="term" value="P:labyrinthine layer blood vessel development"/>
    <property type="evidence" value="ECO:0007669"/>
    <property type="project" value="Ensembl"/>
</dbReference>
<dbReference type="GO" id="GO:0008285">
    <property type="term" value="P:negative regulation of cell population proliferation"/>
    <property type="evidence" value="ECO:0007669"/>
    <property type="project" value="Ensembl"/>
</dbReference>
<dbReference type="GO" id="GO:0030182">
    <property type="term" value="P:neuron differentiation"/>
    <property type="evidence" value="ECO:0000250"/>
    <property type="project" value="UniProtKB"/>
</dbReference>
<dbReference type="GO" id="GO:0035567">
    <property type="term" value="P:non-canonical Wnt signaling pathway"/>
    <property type="evidence" value="ECO:0000314"/>
    <property type="project" value="UniProtKB"/>
</dbReference>
<dbReference type="GO" id="GO:0032731">
    <property type="term" value="P:positive regulation of interleukin-1 beta production"/>
    <property type="evidence" value="ECO:0000250"/>
    <property type="project" value="ARUK-UCL"/>
</dbReference>
<dbReference type="GO" id="GO:1903955">
    <property type="term" value="P:positive regulation of protein targeting to mitochondrion"/>
    <property type="evidence" value="ECO:0007001"/>
    <property type="project" value="ParkinsonsUK-UCL"/>
</dbReference>
<dbReference type="GO" id="GO:0002726">
    <property type="term" value="P:positive regulation of T cell cytokine production"/>
    <property type="evidence" value="ECO:0000314"/>
    <property type="project" value="CACAO"/>
</dbReference>
<dbReference type="GO" id="GO:0045944">
    <property type="term" value="P:positive regulation of transcription by RNA polymerase II"/>
    <property type="evidence" value="ECO:0000314"/>
    <property type="project" value="BHF-UCL"/>
</dbReference>
<dbReference type="GO" id="GO:0032760">
    <property type="term" value="P:positive regulation of tumor necrosis factor production"/>
    <property type="evidence" value="ECO:0000250"/>
    <property type="project" value="ARUK-UCL"/>
</dbReference>
<dbReference type="GO" id="GO:0032729">
    <property type="term" value="P:positive regulation of type II interferon production"/>
    <property type="evidence" value="ECO:0000315"/>
    <property type="project" value="BHF-UCL"/>
</dbReference>
<dbReference type="GO" id="GO:0031077">
    <property type="term" value="P:post-embryonic camera-type eye development"/>
    <property type="evidence" value="ECO:0007669"/>
    <property type="project" value="Ensembl"/>
</dbReference>
<dbReference type="GO" id="GO:2000810">
    <property type="term" value="P:regulation of bicellular tight junction assembly"/>
    <property type="evidence" value="ECO:0007669"/>
    <property type="project" value="Ensembl"/>
</dbReference>
<dbReference type="GO" id="GO:1901382">
    <property type="term" value="P:regulation of chorionic trophoblast cell proliferation"/>
    <property type="evidence" value="ECO:0007669"/>
    <property type="project" value="Ensembl"/>
</dbReference>
<dbReference type="GO" id="GO:1901524">
    <property type="term" value="P:regulation of mitophagy"/>
    <property type="evidence" value="ECO:0007001"/>
    <property type="project" value="ParkinsonsUK-UCL"/>
</dbReference>
<dbReference type="GO" id="GO:0060061">
    <property type="term" value="P:Spemann organizer formation"/>
    <property type="evidence" value="ECO:0000314"/>
    <property type="project" value="BHF-UCL"/>
</dbReference>
<dbReference type="GO" id="GO:0007416">
    <property type="term" value="P:synapse assembly"/>
    <property type="evidence" value="ECO:0000304"/>
    <property type="project" value="ParkinsonsUK-UCL"/>
</dbReference>
<dbReference type="GO" id="GO:0060715">
    <property type="term" value="P:syncytiotrophoblast cell differentiation involved in labyrinthine layer development"/>
    <property type="evidence" value="ECO:0007669"/>
    <property type="project" value="Ensembl"/>
</dbReference>
<dbReference type="GO" id="GO:0033077">
    <property type="term" value="P:T cell differentiation in thymus"/>
    <property type="evidence" value="ECO:0007669"/>
    <property type="project" value="Ensembl"/>
</dbReference>
<dbReference type="CDD" id="cd15249">
    <property type="entry name" value="7tmF_FZD5"/>
    <property type="match status" value="1"/>
</dbReference>
<dbReference type="CDD" id="cd07460">
    <property type="entry name" value="CRD_FZ5"/>
    <property type="match status" value="1"/>
</dbReference>
<dbReference type="FunFam" id="1.10.2000.10:FF:000004">
    <property type="entry name" value="Frizzled class receptor 8a"/>
    <property type="match status" value="1"/>
</dbReference>
<dbReference type="FunFam" id="1.20.1070.10:FF:000053">
    <property type="entry name" value="Frizzled class receptor 8a"/>
    <property type="match status" value="1"/>
</dbReference>
<dbReference type="Gene3D" id="1.10.2000.10">
    <property type="entry name" value="Frizzled cysteine-rich domain"/>
    <property type="match status" value="1"/>
</dbReference>
<dbReference type="Gene3D" id="1.20.1070.10">
    <property type="entry name" value="Rhodopsin 7-helix transmembrane proteins"/>
    <property type="match status" value="1"/>
</dbReference>
<dbReference type="InterPro" id="IPR015526">
    <property type="entry name" value="Frizzled/SFRP"/>
</dbReference>
<dbReference type="InterPro" id="IPR000539">
    <property type="entry name" value="Frizzled/Smoothened_7TM"/>
</dbReference>
<dbReference type="InterPro" id="IPR020067">
    <property type="entry name" value="Frizzled_dom"/>
</dbReference>
<dbReference type="InterPro" id="IPR036790">
    <property type="entry name" value="Frizzled_dom_sf"/>
</dbReference>
<dbReference type="InterPro" id="IPR037441">
    <property type="entry name" value="FZ5_CRD"/>
</dbReference>
<dbReference type="InterPro" id="IPR017981">
    <property type="entry name" value="GPCR_2-like_7TM"/>
</dbReference>
<dbReference type="PANTHER" id="PTHR11309">
    <property type="entry name" value="FRIZZLED"/>
    <property type="match status" value="1"/>
</dbReference>
<dbReference type="PANTHER" id="PTHR11309:SF136">
    <property type="entry name" value="FRIZZLED-5"/>
    <property type="match status" value="1"/>
</dbReference>
<dbReference type="Pfam" id="PF01534">
    <property type="entry name" value="Frizzled"/>
    <property type="match status" value="1"/>
</dbReference>
<dbReference type="Pfam" id="PF01392">
    <property type="entry name" value="Fz"/>
    <property type="match status" value="1"/>
</dbReference>
<dbReference type="PRINTS" id="PR00489">
    <property type="entry name" value="FRIZZLED"/>
</dbReference>
<dbReference type="SMART" id="SM00063">
    <property type="entry name" value="FRI"/>
    <property type="match status" value="1"/>
</dbReference>
<dbReference type="SMART" id="SM01330">
    <property type="entry name" value="Frizzled"/>
    <property type="match status" value="1"/>
</dbReference>
<dbReference type="SUPFAM" id="SSF63501">
    <property type="entry name" value="Frizzled cysteine-rich domain"/>
    <property type="match status" value="1"/>
</dbReference>
<dbReference type="PROSITE" id="PS50038">
    <property type="entry name" value="FZ"/>
    <property type="match status" value="1"/>
</dbReference>
<dbReference type="PROSITE" id="PS50261">
    <property type="entry name" value="G_PROTEIN_RECEP_F2_4"/>
    <property type="match status" value="1"/>
</dbReference>
<feature type="signal peptide" evidence="4">
    <location>
        <begin position="1"/>
        <end position="26"/>
    </location>
</feature>
<feature type="chain" id="PRO_0000012990" description="Frizzled-5">
    <location>
        <begin position="27"/>
        <end position="585"/>
    </location>
</feature>
<feature type="topological domain" description="Extracellular" evidence="4">
    <location>
        <begin position="27"/>
        <end position="238"/>
    </location>
</feature>
<feature type="transmembrane region" description="Helical; Name=1" evidence="4">
    <location>
        <begin position="239"/>
        <end position="259"/>
    </location>
</feature>
<feature type="topological domain" description="Cytoplasmic" evidence="4">
    <location>
        <begin position="260"/>
        <end position="270"/>
    </location>
</feature>
<feature type="transmembrane region" description="Helical; Name=2" evidence="4">
    <location>
        <begin position="271"/>
        <end position="291"/>
    </location>
</feature>
<feature type="topological domain" description="Extracellular" evidence="4">
    <location>
        <begin position="292"/>
        <end position="315"/>
    </location>
</feature>
<feature type="transmembrane region" description="Helical; Name=3" evidence="4">
    <location>
        <begin position="316"/>
        <end position="336"/>
    </location>
</feature>
<feature type="topological domain" description="Cytoplasmic" evidence="4">
    <location>
        <begin position="337"/>
        <end position="358"/>
    </location>
</feature>
<feature type="transmembrane region" description="Helical; Name=4" evidence="4">
    <location>
        <begin position="359"/>
        <end position="379"/>
    </location>
</feature>
<feature type="topological domain" description="Extracellular" evidence="4">
    <location>
        <begin position="380"/>
        <end position="402"/>
    </location>
</feature>
<feature type="transmembrane region" description="Helical; Name=5" evidence="4">
    <location>
        <begin position="403"/>
        <end position="423"/>
    </location>
</feature>
<feature type="topological domain" description="Cytoplasmic" evidence="4">
    <location>
        <begin position="424"/>
        <end position="449"/>
    </location>
</feature>
<feature type="transmembrane region" description="Helical; Name=6" evidence="4">
    <location>
        <begin position="450"/>
        <end position="470"/>
    </location>
</feature>
<feature type="topological domain" description="Extracellular" evidence="4">
    <location>
        <begin position="471"/>
        <end position="500"/>
    </location>
</feature>
<feature type="transmembrane region" description="Helical; Name=7" evidence="4">
    <location>
        <begin position="501"/>
        <end position="521"/>
    </location>
</feature>
<feature type="topological domain" description="Cytoplasmic" evidence="4">
    <location>
        <begin position="522"/>
        <end position="585"/>
    </location>
</feature>
<feature type="domain" description="FZ" evidence="5">
    <location>
        <begin position="28"/>
        <end position="150"/>
    </location>
</feature>
<feature type="region of interest" description="Disordered" evidence="6">
    <location>
        <begin position="156"/>
        <end position="179"/>
    </location>
</feature>
<feature type="short sequence motif" description="Lys-Thr-X-X-X-Trp motif, mediates interaction with the PDZ domain of Dvl family members" evidence="1">
    <location>
        <begin position="525"/>
        <end position="530"/>
    </location>
</feature>
<feature type="short sequence motif" description="PDZ-binding">
    <location>
        <begin position="583"/>
        <end position="585"/>
    </location>
</feature>
<feature type="compositionally biased region" description="Pro residues" evidence="6">
    <location>
        <begin position="159"/>
        <end position="175"/>
    </location>
</feature>
<feature type="glycosylation site" description="N-linked (GlcNAc...) asparagine" evidence="14 19 20">
    <location>
        <position position="47"/>
    </location>
</feature>
<feature type="glycosylation site" description="N-linked (GlcNAc...) asparagine" evidence="4">
    <location>
        <position position="151"/>
    </location>
</feature>
<feature type="disulfide bond" evidence="5 14 19 20">
    <location>
        <begin position="33"/>
        <end position="94"/>
    </location>
</feature>
<feature type="disulfide bond" evidence="5 14 19 20">
    <location>
        <begin position="41"/>
        <end position="87"/>
    </location>
</feature>
<feature type="disulfide bond" evidence="5 14 19 20">
    <location>
        <begin position="78"/>
        <end position="116"/>
    </location>
</feature>
<feature type="disulfide bond" evidence="5 14 19 20">
    <location>
        <begin position="105"/>
        <end position="147"/>
    </location>
</feature>
<feature type="disulfide bond" evidence="5 14 19 20">
    <location>
        <begin position="109"/>
        <end position="133"/>
    </location>
</feature>
<feature type="sequence variant" id="VAR_089410" description="In MCOPCB11; uncertain significance." evidence="16">
    <original>R</original>
    <variation>S</variation>
    <location>
        <position position="130"/>
    </location>
</feature>
<feature type="sequence variant" id="VAR_049291" description="In dbSNP:rs35994626.">
    <original>P</original>
    <variation>L</variation>
    <location>
        <position position="216"/>
    </location>
</feature>
<feature type="sequence variant" id="VAR_089411" description="In MCOPCB11; uncertain significance." evidence="16">
    <original>R</original>
    <variation>L</variation>
    <location>
        <position position="265"/>
    </location>
</feature>
<feature type="sequence variant" id="VAR_089412" description="In MCOPCB11; uncertain significance." evidence="15">
    <original>H</original>
    <variation>RN</variation>
    <location>
        <position position="361"/>
    </location>
</feature>
<feature type="sequence variant" id="VAR_089413" description="In MCOPCB11; uncertain significance." evidence="16">
    <original>G</original>
    <variation>S</variation>
    <location>
        <position position="388"/>
    </location>
</feature>
<feature type="sequence variant" id="VAR_089414" description="In MCOPCB11; uncertain significance; dbSNP:rs750162817." evidence="16">
    <original>Y</original>
    <variation>C</variation>
    <location>
        <position position="411"/>
    </location>
</feature>
<feature type="sequence variant" id="VAR_089415" description="In MCOPCB11; uncertain significance; dbSNP:rs1455180603." evidence="16">
    <original>M</original>
    <variation>L</variation>
    <location>
        <position position="504"/>
    </location>
</feature>
<feature type="sequence conflict" description="In Ref. 1; AAC50385." evidence="18" ref="1">
    <original>S</original>
    <variation>T</variation>
    <location>
        <position position="88"/>
    </location>
</feature>
<feature type="sequence conflict" description="In Ref. 1; AAC50385." evidence="18" ref="1">
    <original>ER</original>
    <variation>DT</variation>
    <location>
        <begin position="262"/>
        <end position="263"/>
    </location>
</feature>
<feature type="sequence conflict" description="In Ref. 1; AAC50385." evidence="18" ref="1">
    <original>G</original>
    <variation>A</variation>
    <location>
        <position position="345"/>
    </location>
</feature>
<feature type="sequence conflict" description="In Ref. 1; AAC50385." evidence="18" ref="1">
    <original>A</original>
    <variation>G</variation>
    <location>
        <position position="357"/>
    </location>
</feature>
<feature type="sequence conflict" description="In Ref. 4; BAF83075." evidence="18" ref="4">
    <original>D</original>
    <variation>G</variation>
    <location>
        <position position="384"/>
    </location>
</feature>
<feature type="sequence conflict" description="In Ref. 1; AAC50385." evidence="18" ref="1">
    <original>G</original>
    <variation>R</variation>
    <location>
        <position position="402"/>
    </location>
</feature>
<feature type="sequence conflict" description="In Ref. 4; BAG37738." evidence="18" ref="4">
    <original>M</original>
    <variation>V</variation>
    <location>
        <position position="504"/>
    </location>
</feature>
<feature type="helix" evidence="21">
    <location>
        <begin position="39"/>
        <end position="41"/>
    </location>
</feature>
<feature type="helix" evidence="21">
    <location>
        <begin position="60"/>
        <end position="67"/>
    </location>
</feature>
<feature type="helix" evidence="21">
    <location>
        <begin position="68"/>
        <end position="70"/>
    </location>
</feature>
<feature type="helix" evidence="21">
    <location>
        <begin position="71"/>
        <end position="76"/>
    </location>
</feature>
<feature type="helix" evidence="21">
    <location>
        <begin position="82"/>
        <end position="90"/>
    </location>
</feature>
<feature type="helix" evidence="21">
    <location>
        <begin position="106"/>
        <end position="122"/>
    </location>
</feature>
<feature type="helix" evidence="21">
    <location>
        <begin position="129"/>
        <end position="131"/>
    </location>
</feature>
<feature type="helix" evidence="21">
    <location>
        <begin position="133"/>
        <end position="135"/>
    </location>
</feature>
<feature type="turn" evidence="21">
    <location>
        <begin position="139"/>
        <end position="141"/>
    </location>
</feature>
<feature type="strand" evidence="21">
    <location>
        <begin position="143"/>
        <end position="145"/>
    </location>
</feature>
<protein>
    <recommendedName>
        <fullName>Frizzled-5</fullName>
        <shortName>Fz-5</shortName>
        <shortName>hFz5</shortName>
    </recommendedName>
    <alternativeName>
        <fullName>FzE5</fullName>
    </alternativeName>
</protein>
<sequence length="585" mass="64507">MARPDPSAPPSLLLLLLAQLVGRAAAASKAPVCQEITVPMCRGIGYNLTHMPNQFNHDTQDEAGLEVHQFWPLVEIQCSPDLRFFLCSMYTPICLPDYHKPLPPCRSVCERAKAGCSPLMRQYGFAWPERMSCDRLPVLGRDAEVLCMDYNRSEATTAPPRPFPAKPTLPGPPGAPASGGECPAGGPFVCKCREPFVPILKESHPLYNKVRTGQVPNCAVPCYQPSFSADERTFATFWIGLWSVLCFISTSTTVATFLIDMERFRYPERPIIFLSACYLCVSLGFLVRLVVGHASVACSREHNHIHYETTGPALCTIVFLLVYFFGMASSIWWVILSLTWFLAAGMKWGNEAIAGYAQYFHLAAWLIPSVKSITALALSSVDGDPVAGICYVGNQNLNSLRGFVLGPLVLYLLVGTLFLLAGFVSLFRIRSVIKQGGTKTDKLEKLMIRIGIFTLLYTVPASIVVACYLYEQHYRESWEAALTCACPGHDTGQPRAKPEYWVLMLKYFMCLVVGITSGVWIWSGKTVESWRRFTSRCCCRPRRGHKSGGAMAAGDYPEASAALTGRTGPPGPAATYHKQVSLSHV</sequence>
<reference key="1">
    <citation type="journal article" date="1996" name="J. Biol. Chem.">
        <title>A large family of putative transmembrane receptors homologous to the product of the Drosophila tissue polarity gene frizzled.</title>
        <authorList>
            <person name="Wang Y."/>
            <person name="Macke J.P."/>
            <person name="Abella B.S."/>
            <person name="Andreasson K."/>
            <person name="Worley P."/>
            <person name="Gilbert D.J."/>
            <person name="Copeland N.G."/>
            <person name="Jenkins N.A."/>
            <person name="Nathans J."/>
        </authorList>
    </citation>
    <scope>NUCLEOTIDE SEQUENCE [MRNA]</scope>
    <source>
        <tissue>Retina</tissue>
    </source>
</reference>
<reference key="2">
    <citation type="journal article" date="2001" name="Int. J. Oncol.">
        <title>Molecular cloning and characterization of human Frizzled-5 gene on chromosome 2q33.3-q34 region.</title>
        <authorList>
            <person name="Saitoh T."/>
            <person name="Hirai M."/>
            <person name="Katoh M."/>
        </authorList>
    </citation>
    <scope>NUCLEOTIDE SEQUENCE [MRNA]</scope>
</reference>
<reference key="3">
    <citation type="journal article" date="2004" name="Nat. Genet.">
        <title>Complete sequencing and characterization of 21,243 full-length human cDNAs.</title>
        <authorList>
            <person name="Ota T."/>
            <person name="Suzuki Y."/>
            <person name="Nishikawa T."/>
            <person name="Otsuki T."/>
            <person name="Sugiyama T."/>
            <person name="Irie R."/>
            <person name="Wakamatsu A."/>
            <person name="Hayashi K."/>
            <person name="Sato H."/>
            <person name="Nagai K."/>
            <person name="Kimura K."/>
            <person name="Makita H."/>
            <person name="Sekine M."/>
            <person name="Obayashi M."/>
            <person name="Nishi T."/>
            <person name="Shibahara T."/>
            <person name="Tanaka T."/>
            <person name="Ishii S."/>
            <person name="Yamamoto J."/>
            <person name="Saito K."/>
            <person name="Kawai Y."/>
            <person name="Isono Y."/>
            <person name="Nakamura Y."/>
            <person name="Nagahari K."/>
            <person name="Murakami K."/>
            <person name="Yasuda T."/>
            <person name="Iwayanagi T."/>
            <person name="Wagatsuma M."/>
            <person name="Shiratori A."/>
            <person name="Sudo H."/>
            <person name="Hosoiri T."/>
            <person name="Kaku Y."/>
            <person name="Kodaira H."/>
            <person name="Kondo H."/>
            <person name="Sugawara M."/>
            <person name="Takahashi M."/>
            <person name="Kanda K."/>
            <person name="Yokoi T."/>
            <person name="Furuya T."/>
            <person name="Kikkawa E."/>
            <person name="Omura Y."/>
            <person name="Abe K."/>
            <person name="Kamihara K."/>
            <person name="Katsuta N."/>
            <person name="Sato K."/>
            <person name="Tanikawa M."/>
            <person name="Yamazaki M."/>
            <person name="Ninomiya K."/>
            <person name="Ishibashi T."/>
            <person name="Yamashita H."/>
            <person name="Murakawa K."/>
            <person name="Fujimori K."/>
            <person name="Tanai H."/>
            <person name="Kimata M."/>
            <person name="Watanabe M."/>
            <person name="Hiraoka S."/>
            <person name="Chiba Y."/>
            <person name="Ishida S."/>
            <person name="Ono Y."/>
            <person name="Takiguchi S."/>
            <person name="Watanabe S."/>
            <person name="Yosida M."/>
            <person name="Hotuta T."/>
            <person name="Kusano J."/>
            <person name="Kanehori K."/>
            <person name="Takahashi-Fujii A."/>
            <person name="Hara H."/>
            <person name="Tanase T.-O."/>
            <person name="Nomura Y."/>
            <person name="Togiya S."/>
            <person name="Komai F."/>
            <person name="Hara R."/>
            <person name="Takeuchi K."/>
            <person name="Arita M."/>
            <person name="Imose N."/>
            <person name="Musashino K."/>
            <person name="Yuuki H."/>
            <person name="Oshima A."/>
            <person name="Sasaki N."/>
            <person name="Aotsuka S."/>
            <person name="Yoshikawa Y."/>
            <person name="Matsunawa H."/>
            <person name="Ichihara T."/>
            <person name="Shiohata N."/>
            <person name="Sano S."/>
            <person name="Moriya S."/>
            <person name="Momiyama H."/>
            <person name="Satoh N."/>
            <person name="Takami S."/>
            <person name="Terashima Y."/>
            <person name="Suzuki O."/>
            <person name="Nakagawa S."/>
            <person name="Senoh A."/>
            <person name="Mizoguchi H."/>
            <person name="Goto Y."/>
            <person name="Shimizu F."/>
            <person name="Wakebe H."/>
            <person name="Hishigaki H."/>
            <person name="Watanabe T."/>
            <person name="Sugiyama A."/>
            <person name="Takemoto M."/>
            <person name="Kawakami B."/>
            <person name="Yamazaki M."/>
            <person name="Watanabe K."/>
            <person name="Kumagai A."/>
            <person name="Itakura S."/>
            <person name="Fukuzumi Y."/>
            <person name="Fujimori Y."/>
            <person name="Komiyama M."/>
            <person name="Tashiro H."/>
            <person name="Tanigami A."/>
            <person name="Fujiwara T."/>
            <person name="Ono T."/>
            <person name="Yamada K."/>
            <person name="Fujii Y."/>
            <person name="Ozaki K."/>
            <person name="Hirao M."/>
            <person name="Ohmori Y."/>
            <person name="Kawabata A."/>
            <person name="Hikiji T."/>
            <person name="Kobatake N."/>
            <person name="Inagaki H."/>
            <person name="Ikema Y."/>
            <person name="Okamoto S."/>
            <person name="Okitani R."/>
            <person name="Kawakami T."/>
            <person name="Noguchi S."/>
            <person name="Itoh T."/>
            <person name="Shigeta K."/>
            <person name="Senba T."/>
            <person name="Matsumura K."/>
            <person name="Nakajima Y."/>
            <person name="Mizuno T."/>
            <person name="Morinaga M."/>
            <person name="Sasaki M."/>
            <person name="Togashi T."/>
            <person name="Oyama M."/>
            <person name="Hata H."/>
            <person name="Watanabe M."/>
            <person name="Komatsu T."/>
            <person name="Mizushima-Sugano J."/>
            <person name="Satoh T."/>
            <person name="Shirai Y."/>
            <person name="Takahashi Y."/>
            <person name="Nakagawa K."/>
            <person name="Okumura K."/>
            <person name="Nagase T."/>
            <person name="Nomura N."/>
            <person name="Kikuchi H."/>
            <person name="Masuho Y."/>
            <person name="Yamashita R."/>
            <person name="Nakai K."/>
            <person name="Yada T."/>
            <person name="Nakamura Y."/>
            <person name="Ohara O."/>
            <person name="Isogai T."/>
            <person name="Sugano S."/>
        </authorList>
    </citation>
    <scope>NUCLEOTIDE SEQUENCE [LARGE SCALE MRNA]</scope>
    <source>
        <tissue>Spleen</tissue>
        <tissue>Umbilical cord blood</tissue>
    </source>
</reference>
<reference key="4">
    <citation type="journal article" date="2005" name="Nature">
        <title>Generation and annotation of the DNA sequences of human chromosomes 2 and 4.</title>
        <authorList>
            <person name="Hillier L.W."/>
            <person name="Graves T.A."/>
            <person name="Fulton R.S."/>
            <person name="Fulton L.A."/>
            <person name="Pepin K.H."/>
            <person name="Minx P."/>
            <person name="Wagner-McPherson C."/>
            <person name="Layman D."/>
            <person name="Wylie K."/>
            <person name="Sekhon M."/>
            <person name="Becker M.C."/>
            <person name="Fewell G.A."/>
            <person name="Delehaunty K.D."/>
            <person name="Miner T.L."/>
            <person name="Nash W.E."/>
            <person name="Kremitzki C."/>
            <person name="Oddy L."/>
            <person name="Du H."/>
            <person name="Sun H."/>
            <person name="Bradshaw-Cordum H."/>
            <person name="Ali J."/>
            <person name="Carter J."/>
            <person name="Cordes M."/>
            <person name="Harris A."/>
            <person name="Isak A."/>
            <person name="van Brunt A."/>
            <person name="Nguyen C."/>
            <person name="Du F."/>
            <person name="Courtney L."/>
            <person name="Kalicki J."/>
            <person name="Ozersky P."/>
            <person name="Abbott S."/>
            <person name="Armstrong J."/>
            <person name="Belter E.A."/>
            <person name="Caruso L."/>
            <person name="Cedroni M."/>
            <person name="Cotton M."/>
            <person name="Davidson T."/>
            <person name="Desai A."/>
            <person name="Elliott G."/>
            <person name="Erb T."/>
            <person name="Fronick C."/>
            <person name="Gaige T."/>
            <person name="Haakenson W."/>
            <person name="Haglund K."/>
            <person name="Holmes A."/>
            <person name="Harkins R."/>
            <person name="Kim K."/>
            <person name="Kruchowski S.S."/>
            <person name="Strong C.M."/>
            <person name="Grewal N."/>
            <person name="Goyea E."/>
            <person name="Hou S."/>
            <person name="Levy A."/>
            <person name="Martinka S."/>
            <person name="Mead K."/>
            <person name="McLellan M.D."/>
            <person name="Meyer R."/>
            <person name="Randall-Maher J."/>
            <person name="Tomlinson C."/>
            <person name="Dauphin-Kohlberg S."/>
            <person name="Kozlowicz-Reilly A."/>
            <person name="Shah N."/>
            <person name="Swearengen-Shahid S."/>
            <person name="Snider J."/>
            <person name="Strong J.T."/>
            <person name="Thompson J."/>
            <person name="Yoakum M."/>
            <person name="Leonard S."/>
            <person name="Pearman C."/>
            <person name="Trani L."/>
            <person name="Radionenko M."/>
            <person name="Waligorski J.E."/>
            <person name="Wang C."/>
            <person name="Rock S.M."/>
            <person name="Tin-Wollam A.-M."/>
            <person name="Maupin R."/>
            <person name="Latreille P."/>
            <person name="Wendl M.C."/>
            <person name="Yang S.-P."/>
            <person name="Pohl C."/>
            <person name="Wallis J.W."/>
            <person name="Spieth J."/>
            <person name="Bieri T.A."/>
            <person name="Berkowicz N."/>
            <person name="Nelson J.O."/>
            <person name="Osborne J."/>
            <person name="Ding L."/>
            <person name="Meyer R."/>
            <person name="Sabo A."/>
            <person name="Shotland Y."/>
            <person name="Sinha P."/>
            <person name="Wohldmann P.E."/>
            <person name="Cook L.L."/>
            <person name="Hickenbotham M.T."/>
            <person name="Eldred J."/>
            <person name="Williams D."/>
            <person name="Jones T.A."/>
            <person name="She X."/>
            <person name="Ciccarelli F.D."/>
            <person name="Izaurralde E."/>
            <person name="Taylor J."/>
            <person name="Schmutz J."/>
            <person name="Myers R.M."/>
            <person name="Cox D.R."/>
            <person name="Huang X."/>
            <person name="McPherson J.D."/>
            <person name="Mardis E.R."/>
            <person name="Clifton S.W."/>
            <person name="Warren W.C."/>
            <person name="Chinwalla A.T."/>
            <person name="Eddy S.R."/>
            <person name="Marra M.A."/>
            <person name="Ovcharenko I."/>
            <person name="Furey T.S."/>
            <person name="Miller W."/>
            <person name="Eichler E.E."/>
            <person name="Bork P."/>
            <person name="Suyama M."/>
            <person name="Torrents D."/>
            <person name="Waterston R.H."/>
            <person name="Wilson R.K."/>
        </authorList>
    </citation>
    <scope>NUCLEOTIDE SEQUENCE [LARGE SCALE GENOMIC DNA]</scope>
</reference>
<reference key="5">
    <citation type="journal article" date="1998" name="Proc. Natl. Acad. Sci. U.S.A.">
        <title>A novel frizzled gene identified in human esophageal carcinoma mediates APC/beta-catenin signals.</title>
        <authorList>
            <person name="Tanaka S."/>
            <person name="Akiyoshi T."/>
            <person name="Mori M."/>
            <person name="Wands J.R."/>
            <person name="Sugimachi K."/>
        </authorList>
    </citation>
    <scope>NUCLEOTIDE SEQUENCE [MRNA] OF 273-331</scope>
    <source>
        <tissue>Esophageal carcinoma</tissue>
    </source>
</reference>
<reference key="6">
    <citation type="journal article" date="1997" name="Science">
        <title>A member of the Frizzled protein family mediating axis induction by Wnt-5A.</title>
        <authorList>
            <person name="He X."/>
            <person name="Saint-Jeannet J.P."/>
            <person name="Wang Y."/>
            <person name="Nathans J."/>
            <person name="Dawid I."/>
            <person name="Varmus H."/>
        </authorList>
    </citation>
    <scope>FUNCTION</scope>
    <scope>COUPLING TO BETA-CATENIN PATHWAY</scope>
</reference>
<reference key="7">
    <citation type="journal article" date="1999" name="Proc. Natl. Acad. Sci. U.S.A.">
        <title>Biochemical characterization of Wnt-frizzled interactions using a soluble, biologically active vertebrate Wnt protein.</title>
        <authorList>
            <person name="Hsieh J.C."/>
            <person name="Rattner A."/>
            <person name="Smallwood P.M."/>
            <person name="Nathans J."/>
        </authorList>
    </citation>
    <scope>FUNCTION</scope>
    <scope>SUBCELLULAR LOCATION</scope>
</reference>
<reference key="8">
    <citation type="journal article" date="2003" name="Development">
        <title>Wnt2b controls retinal cell differentiation at the ciliary marginal zone.</title>
        <authorList>
            <person name="Kubo F."/>
            <person name="Takeichi M."/>
            <person name="Nakagawa S."/>
        </authorList>
    </citation>
    <scope>INTERACTION WITH WNT2B</scope>
</reference>
<reference key="9">
    <citation type="journal article" date="2008" name="Biochem. Biophys. Res. Commun.">
        <title>Wnt7a interaction with Fzd5 and detection of signaling activation using a split eGFP.</title>
        <authorList>
            <person name="Carmon K.S."/>
            <person name="Loose D.S."/>
        </authorList>
    </citation>
    <scope>INTERACTION WITH WNT7A</scope>
</reference>
<reference key="10">
    <citation type="journal article" date="2010" name="Development">
        <title>Frizzled-5, a receptor for the synaptic organizer Wnt7a, regulates activity-mediated synaptogenesis.</title>
        <authorList>
            <person name="Sahores M."/>
            <person name="Gibb A."/>
            <person name="Salinas P.C."/>
        </authorList>
    </citation>
    <scope>FUNCTION</scope>
    <scope>INTERACTION WITH WNT7A</scope>
</reference>
<reference key="11">
    <citation type="journal article" date="2012" name="Nature">
        <title>ZNRF3 promotes Wnt receptor turnover in an R-spondin-sensitive manner.</title>
        <authorList>
            <person name="Hao H.X."/>
            <person name="Xie Y."/>
            <person name="Zhang Y."/>
            <person name="Charlat O."/>
            <person name="Oster E."/>
            <person name="Avello M."/>
            <person name="Lei H."/>
            <person name="Mickanin C."/>
            <person name="Liu D."/>
            <person name="Ruffner H."/>
            <person name="Mao X."/>
            <person name="Ma Q."/>
            <person name="Zamponi R."/>
            <person name="Bouwmeester T."/>
            <person name="Finan P.M."/>
            <person name="Kirschner M.W."/>
            <person name="Porter J.A."/>
            <person name="Serluca F.C."/>
            <person name="Cong F."/>
        </authorList>
    </citation>
    <scope>UBIQUITINATION BY ZNRF3</scope>
</reference>
<reference key="12">
    <citation type="journal article" date="2012" name="Nature">
        <title>Tumour suppressor RNF43 is a stem-cell E3 ligase that induces endocytosis of Wnt receptors.</title>
        <authorList>
            <person name="Koo B.K."/>
            <person name="Spit M."/>
            <person name="Jordens I."/>
            <person name="Low T.Y."/>
            <person name="Stange D.E."/>
            <person name="van de Wetering M."/>
            <person name="van Es J.H."/>
            <person name="Mohammed S."/>
            <person name="Heck A.J."/>
            <person name="Maurice M.M."/>
            <person name="Clevers H."/>
        </authorList>
    </citation>
    <scope>UBIQUITINATION BY RNF43</scope>
</reference>
<reference evidence="19 20" key="13">
    <citation type="journal article" date="2017" name="Proc. Natl. Acad. Sci. U.S.A.">
        <title>Unsaturated fatty acyl recognition by Frizzled receptors mediates dimerization upon Wnt ligand binding.</title>
        <authorList>
            <person name="Nile A.H."/>
            <person name="Mukund S."/>
            <person name="Stanger K."/>
            <person name="Wang W."/>
            <person name="Hannoush R.N."/>
        </authorList>
    </citation>
    <scope>X-RAY CRYSTALLOGRAPHY (2.10 ANGSTROMS) OF 28-155 IN COMPLEX WITH UNSATURATED FATTY ACID</scope>
    <scope>SUBUNIT</scope>
    <scope>GLYCOSYLATION AT ASN-47</scope>
    <scope>DISULFIDE BONDS</scope>
</reference>
<reference key="14">
    <citation type="journal article" date="2016" name="Hum. Mol. Genet.">
        <title>A secreted WNT-ligand-binding domain of FZD5 generated by a frameshift mutation causes autosomal dominant coloboma.</title>
        <authorList>
            <person name="Liu C."/>
            <person name="Widen S.A."/>
            <person name="Williamson K.A."/>
            <person name="Ratnapriya R."/>
            <person name="Gerth-Kahlert C."/>
            <person name="Rainger J."/>
            <person name="Alur R.P."/>
            <person name="Strachan E."/>
            <person name="Manjunath S.H."/>
            <person name="Balakrishnan A."/>
            <person name="Floyd J.A."/>
            <person name="Li T."/>
            <person name="Waskiewicz A."/>
            <person name="Brooks B.P."/>
            <person name="Lehmann O.J."/>
            <person name="FitzPatrick D.R."/>
            <person name="Swaroop A."/>
        </authorList>
    </citation>
    <scope>INVOLVEMENT IN MCOPCB11</scope>
    <scope>FUNCTION</scope>
    <scope>SUBCELLULAR LOCATION</scope>
    <scope>INTERACTION WITH WNT3A AND WNT7A</scope>
</reference>
<reference key="15">
    <citation type="journal article" date="2021" name="Eur. J. Hum. Genet.">
        <title>Confirmation of FZD5 implication in a cohort of 50 patients with ocular coloboma.</title>
        <authorList>
            <person name="Aubert-Mucca M."/>
            <person name="Pernin-Grandjean J."/>
            <person name="Marchasson S."/>
            <person name="Gaston V."/>
            <person name="Habib C."/>
            <person name="Meunier I."/>
            <person name="Sigaudy S."/>
            <person name="Kaplan J."/>
            <person name="Roche O."/>
            <person name="Denis D."/>
            <person name="Bitoun P."/>
            <person name="Haye D."/>
            <person name="Verloes A."/>
            <person name="Calvas P."/>
            <person name="Chassaing N."/>
            <person name="Plaisancie J."/>
        </authorList>
    </citation>
    <scope>INVOLVEMENT IN MCOPCB11</scope>
    <scope>VARIANT MCOPCB11 HIS-361 DELINS ARG-ASN</scope>
</reference>
<reference key="16">
    <citation type="journal article" date="2021" name="Mol. Vis.">
        <title>Confirming and expanding the phenotypes of FZD5 variants: Coloboma, inferior chorioretinal hypoplasia, and high myopia.</title>
        <authorList>
            <person name="Jiang Y."/>
            <person name="Ouyang J."/>
            <person name="Li S."/>
            <person name="Xiao X."/>
            <person name="Sun W."/>
            <person name="Zhang Q."/>
        </authorList>
    </citation>
    <scope>INVOLVEMENT IN MCOPCB11</scope>
    <scope>VARIANTS MCOPCB11 SER-130; LEU-265; SER-388; CYS-411 AND LEU-504</scope>
</reference>